<dbReference type="EC" id="6.3.2.9" evidence="1"/>
<dbReference type="EMBL" id="AE016827">
    <property type="protein sequence ID" value="AAU38276.1"/>
    <property type="molecule type" value="Genomic_DNA"/>
</dbReference>
<dbReference type="RefSeq" id="WP_011200837.1">
    <property type="nucleotide sequence ID" value="NC_006300.1"/>
</dbReference>
<dbReference type="SMR" id="Q65RY4"/>
<dbReference type="STRING" id="221988.MS1669"/>
<dbReference type="KEGG" id="msu:MS1669"/>
<dbReference type="eggNOG" id="COG0771">
    <property type="taxonomic scope" value="Bacteria"/>
</dbReference>
<dbReference type="HOGENOM" id="CLU_032540_1_0_6"/>
<dbReference type="OrthoDB" id="9809796at2"/>
<dbReference type="UniPathway" id="UPA00219"/>
<dbReference type="Proteomes" id="UP000000607">
    <property type="component" value="Chromosome"/>
</dbReference>
<dbReference type="GO" id="GO:0005737">
    <property type="term" value="C:cytoplasm"/>
    <property type="evidence" value="ECO:0007669"/>
    <property type="project" value="UniProtKB-SubCell"/>
</dbReference>
<dbReference type="GO" id="GO:0005524">
    <property type="term" value="F:ATP binding"/>
    <property type="evidence" value="ECO:0007669"/>
    <property type="project" value="UniProtKB-UniRule"/>
</dbReference>
<dbReference type="GO" id="GO:0008764">
    <property type="term" value="F:UDP-N-acetylmuramoylalanine-D-glutamate ligase activity"/>
    <property type="evidence" value="ECO:0007669"/>
    <property type="project" value="UniProtKB-UniRule"/>
</dbReference>
<dbReference type="GO" id="GO:0051301">
    <property type="term" value="P:cell division"/>
    <property type="evidence" value="ECO:0007669"/>
    <property type="project" value="UniProtKB-KW"/>
</dbReference>
<dbReference type="GO" id="GO:0071555">
    <property type="term" value="P:cell wall organization"/>
    <property type="evidence" value="ECO:0007669"/>
    <property type="project" value="UniProtKB-KW"/>
</dbReference>
<dbReference type="GO" id="GO:0009252">
    <property type="term" value="P:peptidoglycan biosynthetic process"/>
    <property type="evidence" value="ECO:0007669"/>
    <property type="project" value="UniProtKB-UniRule"/>
</dbReference>
<dbReference type="GO" id="GO:0008360">
    <property type="term" value="P:regulation of cell shape"/>
    <property type="evidence" value="ECO:0007669"/>
    <property type="project" value="UniProtKB-KW"/>
</dbReference>
<dbReference type="Gene3D" id="3.90.190.20">
    <property type="entry name" value="Mur ligase, C-terminal domain"/>
    <property type="match status" value="1"/>
</dbReference>
<dbReference type="Gene3D" id="3.40.1190.10">
    <property type="entry name" value="Mur-like, catalytic domain"/>
    <property type="match status" value="1"/>
</dbReference>
<dbReference type="Gene3D" id="3.40.50.720">
    <property type="entry name" value="NAD(P)-binding Rossmann-like Domain"/>
    <property type="match status" value="1"/>
</dbReference>
<dbReference type="HAMAP" id="MF_00639">
    <property type="entry name" value="MurD"/>
    <property type="match status" value="1"/>
</dbReference>
<dbReference type="InterPro" id="IPR036565">
    <property type="entry name" value="Mur-like_cat_sf"/>
</dbReference>
<dbReference type="InterPro" id="IPR004101">
    <property type="entry name" value="Mur_ligase_C"/>
</dbReference>
<dbReference type="InterPro" id="IPR036615">
    <property type="entry name" value="Mur_ligase_C_dom_sf"/>
</dbReference>
<dbReference type="InterPro" id="IPR013221">
    <property type="entry name" value="Mur_ligase_cen"/>
</dbReference>
<dbReference type="InterPro" id="IPR005762">
    <property type="entry name" value="MurD"/>
</dbReference>
<dbReference type="NCBIfam" id="TIGR01087">
    <property type="entry name" value="murD"/>
    <property type="match status" value="1"/>
</dbReference>
<dbReference type="PANTHER" id="PTHR43692">
    <property type="entry name" value="UDP-N-ACETYLMURAMOYLALANINE--D-GLUTAMATE LIGASE"/>
    <property type="match status" value="1"/>
</dbReference>
<dbReference type="PANTHER" id="PTHR43692:SF1">
    <property type="entry name" value="UDP-N-ACETYLMURAMOYLALANINE--D-GLUTAMATE LIGASE"/>
    <property type="match status" value="1"/>
</dbReference>
<dbReference type="Pfam" id="PF02875">
    <property type="entry name" value="Mur_ligase_C"/>
    <property type="match status" value="1"/>
</dbReference>
<dbReference type="Pfam" id="PF08245">
    <property type="entry name" value="Mur_ligase_M"/>
    <property type="match status" value="1"/>
</dbReference>
<dbReference type="Pfam" id="PF21799">
    <property type="entry name" value="MurD-like_N"/>
    <property type="match status" value="1"/>
</dbReference>
<dbReference type="SUPFAM" id="SSF51984">
    <property type="entry name" value="MurCD N-terminal domain"/>
    <property type="match status" value="1"/>
</dbReference>
<dbReference type="SUPFAM" id="SSF53623">
    <property type="entry name" value="MurD-like peptide ligases, catalytic domain"/>
    <property type="match status" value="1"/>
</dbReference>
<dbReference type="SUPFAM" id="SSF53244">
    <property type="entry name" value="MurD-like peptide ligases, peptide-binding domain"/>
    <property type="match status" value="1"/>
</dbReference>
<accession>Q65RY4</accession>
<comment type="function">
    <text evidence="1">Cell wall formation. Catalyzes the addition of glutamate to the nucleotide precursor UDP-N-acetylmuramoyl-L-alanine (UMA).</text>
</comment>
<comment type="catalytic activity">
    <reaction evidence="1">
        <text>UDP-N-acetyl-alpha-D-muramoyl-L-alanine + D-glutamate + ATP = UDP-N-acetyl-alpha-D-muramoyl-L-alanyl-D-glutamate + ADP + phosphate + H(+)</text>
        <dbReference type="Rhea" id="RHEA:16429"/>
        <dbReference type="ChEBI" id="CHEBI:15378"/>
        <dbReference type="ChEBI" id="CHEBI:29986"/>
        <dbReference type="ChEBI" id="CHEBI:30616"/>
        <dbReference type="ChEBI" id="CHEBI:43474"/>
        <dbReference type="ChEBI" id="CHEBI:83898"/>
        <dbReference type="ChEBI" id="CHEBI:83900"/>
        <dbReference type="ChEBI" id="CHEBI:456216"/>
        <dbReference type="EC" id="6.3.2.9"/>
    </reaction>
</comment>
<comment type="pathway">
    <text evidence="1">Cell wall biogenesis; peptidoglycan biosynthesis.</text>
</comment>
<comment type="subcellular location">
    <subcellularLocation>
        <location evidence="1">Cytoplasm</location>
    </subcellularLocation>
</comment>
<comment type="similarity">
    <text evidence="1">Belongs to the MurCDEF family.</text>
</comment>
<name>MURD_MANSM</name>
<sequence length="439" mass="47400">MTDYQGKNITVIGLGKTGLSCVDFLTAKKANVRVIDTRKIPAGAEQLDKSIPLHTGSLNQQWLLESDMIVISPGLSVKTAEIQTALSAGVEVVGDIELFCREAAKPVIAITGSNGKSTVTALVTEMGKAAGLSVGMGGNIGIPALSLLNENHDLYVLELSSFQLETTYSLKATAATVLNVTEDHMNRYADLEEYRQAKLNIYHHCQTAVINGEDPLTKEDDKQSAQQQVSFAENNADYWLKTENGKKYLMAKDKLILACDEIKLTGRHNHMNALAAIALAQAAGIKNSGILTALRTFPGLAHRFQLAHMANGVRWVNDSKATNVGSTVAALTGLHIEGKLHLLLGGDGKGADFSELEKLINKPEIFCYCFGQDGAHLAKLSSQSQLFNTMEQAIETLRPTLKPGDMVLLSPACASLDQFASFEKRGEEFTRLAKLSVAQ</sequence>
<feature type="chain" id="PRO_0000109041" description="UDP-N-acetylmuramoylalanine--D-glutamate ligase">
    <location>
        <begin position="1"/>
        <end position="439"/>
    </location>
</feature>
<feature type="binding site" evidence="1">
    <location>
        <begin position="112"/>
        <end position="118"/>
    </location>
    <ligand>
        <name>ATP</name>
        <dbReference type="ChEBI" id="CHEBI:30616"/>
    </ligand>
</feature>
<keyword id="KW-0067">ATP-binding</keyword>
<keyword id="KW-0131">Cell cycle</keyword>
<keyword id="KW-0132">Cell division</keyword>
<keyword id="KW-0133">Cell shape</keyword>
<keyword id="KW-0961">Cell wall biogenesis/degradation</keyword>
<keyword id="KW-0963">Cytoplasm</keyword>
<keyword id="KW-0436">Ligase</keyword>
<keyword id="KW-0547">Nucleotide-binding</keyword>
<keyword id="KW-0573">Peptidoglycan synthesis</keyword>
<organism>
    <name type="scientific">Mannheimia succiniciproducens (strain KCTC 0769BP / MBEL55E)</name>
    <dbReference type="NCBI Taxonomy" id="221988"/>
    <lineage>
        <taxon>Bacteria</taxon>
        <taxon>Pseudomonadati</taxon>
        <taxon>Pseudomonadota</taxon>
        <taxon>Gammaproteobacteria</taxon>
        <taxon>Pasteurellales</taxon>
        <taxon>Pasteurellaceae</taxon>
        <taxon>Basfia</taxon>
    </lineage>
</organism>
<reference key="1">
    <citation type="journal article" date="2004" name="Nat. Biotechnol.">
        <title>The genome sequence of the capnophilic rumen bacterium Mannheimia succiniciproducens.</title>
        <authorList>
            <person name="Hong S.H."/>
            <person name="Kim J.S."/>
            <person name="Lee S.Y."/>
            <person name="In Y.H."/>
            <person name="Choi S.S."/>
            <person name="Rih J.-K."/>
            <person name="Kim C.H."/>
            <person name="Jeong H."/>
            <person name="Hur C.G."/>
            <person name="Kim J.J."/>
        </authorList>
    </citation>
    <scope>NUCLEOTIDE SEQUENCE [LARGE SCALE GENOMIC DNA]</scope>
    <source>
        <strain>KCTC 0769BP / MBEL55E</strain>
    </source>
</reference>
<proteinExistence type="inferred from homology"/>
<protein>
    <recommendedName>
        <fullName evidence="1">UDP-N-acetylmuramoylalanine--D-glutamate ligase</fullName>
        <ecNumber evidence="1">6.3.2.9</ecNumber>
    </recommendedName>
    <alternativeName>
        <fullName evidence="1">D-glutamic acid-adding enzyme</fullName>
    </alternativeName>
    <alternativeName>
        <fullName evidence="1">UDP-N-acetylmuramoyl-L-alanyl-D-glutamate synthetase</fullName>
    </alternativeName>
</protein>
<gene>
    <name evidence="1" type="primary">murD</name>
    <name type="ordered locus">MS1669</name>
</gene>
<evidence type="ECO:0000255" key="1">
    <source>
        <dbReference type="HAMAP-Rule" id="MF_00639"/>
    </source>
</evidence>